<dbReference type="EC" id="6.1.1.7" evidence="1"/>
<dbReference type="EMBL" id="AE005674">
    <property type="protein sequence ID" value="AAN44212.2"/>
    <property type="molecule type" value="Genomic_DNA"/>
</dbReference>
<dbReference type="EMBL" id="AE014073">
    <property type="protein sequence ID" value="AAP18038.1"/>
    <property type="molecule type" value="Genomic_DNA"/>
</dbReference>
<dbReference type="RefSeq" id="NP_708505.2">
    <property type="nucleotide sequence ID" value="NC_004337.2"/>
</dbReference>
<dbReference type="RefSeq" id="WP_000047164.1">
    <property type="nucleotide sequence ID" value="NZ_WPGW01000014.1"/>
</dbReference>
<dbReference type="SMR" id="Q7UBU3"/>
<dbReference type="STRING" id="198214.SF2720"/>
<dbReference type="PaxDb" id="198214-SF2720"/>
<dbReference type="GeneID" id="1025713"/>
<dbReference type="KEGG" id="sfl:SF2720"/>
<dbReference type="KEGG" id="sfx:S2911"/>
<dbReference type="PATRIC" id="fig|198214.7.peg.3239"/>
<dbReference type="HOGENOM" id="CLU_004485_1_1_6"/>
<dbReference type="Proteomes" id="UP000001006">
    <property type="component" value="Chromosome"/>
</dbReference>
<dbReference type="Proteomes" id="UP000002673">
    <property type="component" value="Chromosome"/>
</dbReference>
<dbReference type="GO" id="GO:0005829">
    <property type="term" value="C:cytosol"/>
    <property type="evidence" value="ECO:0007669"/>
    <property type="project" value="TreeGrafter"/>
</dbReference>
<dbReference type="GO" id="GO:0004813">
    <property type="term" value="F:alanine-tRNA ligase activity"/>
    <property type="evidence" value="ECO:0007669"/>
    <property type="project" value="UniProtKB-UniRule"/>
</dbReference>
<dbReference type="GO" id="GO:0002161">
    <property type="term" value="F:aminoacyl-tRNA deacylase activity"/>
    <property type="evidence" value="ECO:0007669"/>
    <property type="project" value="TreeGrafter"/>
</dbReference>
<dbReference type="GO" id="GO:0005524">
    <property type="term" value="F:ATP binding"/>
    <property type="evidence" value="ECO:0007669"/>
    <property type="project" value="UniProtKB-UniRule"/>
</dbReference>
<dbReference type="GO" id="GO:0000049">
    <property type="term" value="F:tRNA binding"/>
    <property type="evidence" value="ECO:0007669"/>
    <property type="project" value="UniProtKB-KW"/>
</dbReference>
<dbReference type="GO" id="GO:0008270">
    <property type="term" value="F:zinc ion binding"/>
    <property type="evidence" value="ECO:0007669"/>
    <property type="project" value="UniProtKB-UniRule"/>
</dbReference>
<dbReference type="GO" id="GO:0006419">
    <property type="term" value="P:alanyl-tRNA aminoacylation"/>
    <property type="evidence" value="ECO:0007669"/>
    <property type="project" value="UniProtKB-UniRule"/>
</dbReference>
<dbReference type="GO" id="GO:0045892">
    <property type="term" value="P:negative regulation of DNA-templated transcription"/>
    <property type="evidence" value="ECO:0007669"/>
    <property type="project" value="TreeGrafter"/>
</dbReference>
<dbReference type="CDD" id="cd00673">
    <property type="entry name" value="AlaRS_core"/>
    <property type="match status" value="1"/>
</dbReference>
<dbReference type="FunFam" id="2.40.30.130:FF:000001">
    <property type="entry name" value="Alanine--tRNA ligase"/>
    <property type="match status" value="1"/>
</dbReference>
<dbReference type="FunFam" id="3.10.310.40:FF:000001">
    <property type="entry name" value="Alanine--tRNA ligase"/>
    <property type="match status" value="1"/>
</dbReference>
<dbReference type="FunFam" id="3.30.54.20:FF:000001">
    <property type="entry name" value="Alanine--tRNA ligase"/>
    <property type="match status" value="1"/>
</dbReference>
<dbReference type="FunFam" id="3.30.930.10:FF:000004">
    <property type="entry name" value="Alanine--tRNA ligase"/>
    <property type="match status" value="1"/>
</dbReference>
<dbReference type="FunFam" id="3.30.980.10:FF:000004">
    <property type="entry name" value="Alanine--tRNA ligase, cytoplasmic"/>
    <property type="match status" value="1"/>
</dbReference>
<dbReference type="Gene3D" id="2.40.30.130">
    <property type="match status" value="1"/>
</dbReference>
<dbReference type="Gene3D" id="3.10.310.40">
    <property type="match status" value="1"/>
</dbReference>
<dbReference type="Gene3D" id="3.30.54.20">
    <property type="match status" value="1"/>
</dbReference>
<dbReference type="Gene3D" id="6.10.250.550">
    <property type="match status" value="1"/>
</dbReference>
<dbReference type="Gene3D" id="3.30.930.10">
    <property type="entry name" value="Bira Bifunctional Protein, Domain 2"/>
    <property type="match status" value="1"/>
</dbReference>
<dbReference type="Gene3D" id="3.30.980.10">
    <property type="entry name" value="Threonyl-trna Synthetase, Chain A, domain 2"/>
    <property type="match status" value="1"/>
</dbReference>
<dbReference type="HAMAP" id="MF_00036_B">
    <property type="entry name" value="Ala_tRNA_synth_B"/>
    <property type="match status" value="1"/>
</dbReference>
<dbReference type="InterPro" id="IPR045864">
    <property type="entry name" value="aa-tRNA-synth_II/BPL/LPL"/>
</dbReference>
<dbReference type="InterPro" id="IPR002318">
    <property type="entry name" value="Ala-tRNA-lgiase_IIc"/>
</dbReference>
<dbReference type="InterPro" id="IPR018162">
    <property type="entry name" value="Ala-tRNA-ligase_IIc_anticod-bd"/>
</dbReference>
<dbReference type="InterPro" id="IPR018165">
    <property type="entry name" value="Ala-tRNA-synth_IIc_core"/>
</dbReference>
<dbReference type="InterPro" id="IPR018164">
    <property type="entry name" value="Ala-tRNA-synth_IIc_N"/>
</dbReference>
<dbReference type="InterPro" id="IPR050058">
    <property type="entry name" value="Ala-tRNA_ligase"/>
</dbReference>
<dbReference type="InterPro" id="IPR023033">
    <property type="entry name" value="Ala_tRNA_ligase_euk/bac"/>
</dbReference>
<dbReference type="InterPro" id="IPR003156">
    <property type="entry name" value="DHHA1_dom"/>
</dbReference>
<dbReference type="InterPro" id="IPR018163">
    <property type="entry name" value="Thr/Ala-tRNA-synth_IIc_edit"/>
</dbReference>
<dbReference type="InterPro" id="IPR009000">
    <property type="entry name" value="Transl_B-barrel_sf"/>
</dbReference>
<dbReference type="InterPro" id="IPR012947">
    <property type="entry name" value="tRNA_SAD"/>
</dbReference>
<dbReference type="NCBIfam" id="TIGR00344">
    <property type="entry name" value="alaS"/>
    <property type="match status" value="1"/>
</dbReference>
<dbReference type="PANTHER" id="PTHR11777:SF9">
    <property type="entry name" value="ALANINE--TRNA LIGASE, CYTOPLASMIC"/>
    <property type="match status" value="1"/>
</dbReference>
<dbReference type="PANTHER" id="PTHR11777">
    <property type="entry name" value="ALANYL-TRNA SYNTHETASE"/>
    <property type="match status" value="1"/>
</dbReference>
<dbReference type="Pfam" id="PF02272">
    <property type="entry name" value="DHHA1"/>
    <property type="match status" value="1"/>
</dbReference>
<dbReference type="Pfam" id="PF01411">
    <property type="entry name" value="tRNA-synt_2c"/>
    <property type="match status" value="1"/>
</dbReference>
<dbReference type="Pfam" id="PF07973">
    <property type="entry name" value="tRNA_SAD"/>
    <property type="match status" value="1"/>
</dbReference>
<dbReference type="PRINTS" id="PR00980">
    <property type="entry name" value="TRNASYNTHALA"/>
</dbReference>
<dbReference type="SMART" id="SM00863">
    <property type="entry name" value="tRNA_SAD"/>
    <property type="match status" value="1"/>
</dbReference>
<dbReference type="SUPFAM" id="SSF55681">
    <property type="entry name" value="Class II aaRS and biotin synthetases"/>
    <property type="match status" value="1"/>
</dbReference>
<dbReference type="SUPFAM" id="SSF101353">
    <property type="entry name" value="Putative anticodon-binding domain of alanyl-tRNA synthetase (AlaRS)"/>
    <property type="match status" value="1"/>
</dbReference>
<dbReference type="SUPFAM" id="SSF55186">
    <property type="entry name" value="ThrRS/AlaRS common domain"/>
    <property type="match status" value="1"/>
</dbReference>
<dbReference type="SUPFAM" id="SSF50447">
    <property type="entry name" value="Translation proteins"/>
    <property type="match status" value="1"/>
</dbReference>
<dbReference type="PROSITE" id="PS50860">
    <property type="entry name" value="AA_TRNA_LIGASE_II_ALA"/>
    <property type="match status" value="1"/>
</dbReference>
<reference key="1">
    <citation type="journal article" date="2002" name="Nucleic Acids Res.">
        <title>Genome sequence of Shigella flexneri 2a: insights into pathogenicity through comparison with genomes of Escherichia coli K12 and O157.</title>
        <authorList>
            <person name="Jin Q."/>
            <person name="Yuan Z."/>
            <person name="Xu J."/>
            <person name="Wang Y."/>
            <person name="Shen Y."/>
            <person name="Lu W."/>
            <person name="Wang J."/>
            <person name="Liu H."/>
            <person name="Yang J."/>
            <person name="Yang F."/>
            <person name="Zhang X."/>
            <person name="Zhang J."/>
            <person name="Yang G."/>
            <person name="Wu H."/>
            <person name="Qu D."/>
            <person name="Dong J."/>
            <person name="Sun L."/>
            <person name="Xue Y."/>
            <person name="Zhao A."/>
            <person name="Gao Y."/>
            <person name="Zhu J."/>
            <person name="Kan B."/>
            <person name="Ding K."/>
            <person name="Chen S."/>
            <person name="Cheng H."/>
            <person name="Yao Z."/>
            <person name="He B."/>
            <person name="Chen R."/>
            <person name="Ma D."/>
            <person name="Qiang B."/>
            <person name="Wen Y."/>
            <person name="Hou Y."/>
            <person name="Yu J."/>
        </authorList>
    </citation>
    <scope>NUCLEOTIDE SEQUENCE [LARGE SCALE GENOMIC DNA]</scope>
    <source>
        <strain>301 / Serotype 2a</strain>
    </source>
</reference>
<reference key="2">
    <citation type="journal article" date="2003" name="Infect. Immun.">
        <title>Complete genome sequence and comparative genomics of Shigella flexneri serotype 2a strain 2457T.</title>
        <authorList>
            <person name="Wei J."/>
            <person name="Goldberg M.B."/>
            <person name="Burland V."/>
            <person name="Venkatesan M.M."/>
            <person name="Deng W."/>
            <person name="Fournier G."/>
            <person name="Mayhew G.F."/>
            <person name="Plunkett G. III"/>
            <person name="Rose D.J."/>
            <person name="Darling A."/>
            <person name="Mau B."/>
            <person name="Perna N.T."/>
            <person name="Payne S.M."/>
            <person name="Runyen-Janecky L.J."/>
            <person name="Zhou S."/>
            <person name="Schwartz D.C."/>
            <person name="Blattner F.R."/>
        </authorList>
    </citation>
    <scope>NUCLEOTIDE SEQUENCE [LARGE SCALE GENOMIC DNA]</scope>
    <source>
        <strain>ATCC 700930 / 2457T / Serotype 2a</strain>
    </source>
</reference>
<protein>
    <recommendedName>
        <fullName evidence="1">Alanine--tRNA ligase</fullName>
        <ecNumber evidence="1">6.1.1.7</ecNumber>
    </recommendedName>
    <alternativeName>
        <fullName evidence="1">Alanyl-tRNA synthetase</fullName>
        <shortName evidence="1">AlaRS</shortName>
    </alternativeName>
</protein>
<feature type="chain" id="PRO_0000075199" description="Alanine--tRNA ligase">
    <location>
        <begin position="1"/>
        <end position="876"/>
    </location>
</feature>
<feature type="binding site" evidence="1">
    <location>
        <position position="564"/>
    </location>
    <ligand>
        <name>Zn(2+)</name>
        <dbReference type="ChEBI" id="CHEBI:29105"/>
    </ligand>
</feature>
<feature type="binding site" evidence="1">
    <location>
        <position position="568"/>
    </location>
    <ligand>
        <name>Zn(2+)</name>
        <dbReference type="ChEBI" id="CHEBI:29105"/>
    </ligand>
</feature>
<feature type="binding site" evidence="1">
    <location>
        <position position="666"/>
    </location>
    <ligand>
        <name>Zn(2+)</name>
        <dbReference type="ChEBI" id="CHEBI:29105"/>
    </ligand>
</feature>
<feature type="binding site" evidence="1">
    <location>
        <position position="670"/>
    </location>
    <ligand>
        <name>Zn(2+)</name>
        <dbReference type="ChEBI" id="CHEBI:29105"/>
    </ligand>
</feature>
<feature type="modified residue" description="N6-acetyllysine" evidence="1">
    <location>
        <position position="74"/>
    </location>
</feature>
<sequence>MSKSTAEIRQAFLDFFHSKGHQVVASSSLVPHNDPTLLFTNAGMNQFKDVFLGLDKRNYSRATTSQRCVRAGGKHNDLENVGYTARHHTFFEMLGNFSFGDYFKHDAIQFAWELLTSEKWFALPKERLWVTVYESDDEAYEIWEKEVGIPRERIIRIGDNKGAPYASDNFWQMGDTGPCGPCTEIFYDHGDHIWGGPPGSPEEDGDRYIEIWNIVFMQFNRQADGTMEPLPKPSVDTGMGLERIAAVLQHVNSNYDIDLFRTLIQAVAKVTGATDLSNKSLRVIADHIRSCAFLIADGVMPSNENRGYVLRRIIRRAVRHGNMLGAKETFFYKLVGPLIDVMGSAGEDLKRQQAQVEQVLKTEEEQFARTLERGLALLDEELAKLSGDTLDGETAFRLYDTYGFPVDLTADVCRERNIKVDEAGFEAAMEEQRRRAREASGFGADYNAMIRVDSASEFKGYDHLELNGKVTALFVDGKAVDAINAGQEAVVVLDQTPFYAESGGQVGDKGELKGANFSFAVEDTQKYGQAIGHIGKLAAGSLKVGDAVQADIDEARRARIRLNHSATHLMHAALRQVLGTHVSQKGSLVNDKVLRFDFSHNEAMKPEEIRAVEDLVNAQIRRNLPIETNIMNLEAAKAKGAMALFGEKYDERVRVLSMGDFSTELCGGTHASRTGDIGLFRIISESGTAAGVRRIEAVTGEGAITTVHADSDRLSEVAHLLKGDSNNLADKVRSVLERTRQLEKELQQLKEQAAAQESANLSSKAIDVNGVKLLVSELSGVEPKMLRTMVDDLKNQLGSTIIVLATVAEGKVSLIAGVSKDVTDRVKAGELIGMVAQQVGGKGGGRPDMAQAGGTDAAALPAALASVKGWVSAKLQ</sequence>
<organism>
    <name type="scientific">Shigella flexneri</name>
    <dbReference type="NCBI Taxonomy" id="623"/>
    <lineage>
        <taxon>Bacteria</taxon>
        <taxon>Pseudomonadati</taxon>
        <taxon>Pseudomonadota</taxon>
        <taxon>Gammaproteobacteria</taxon>
        <taxon>Enterobacterales</taxon>
        <taxon>Enterobacteriaceae</taxon>
        <taxon>Shigella</taxon>
    </lineage>
</organism>
<gene>
    <name evidence="1" type="primary">alaS</name>
    <name type="ordered locus">SF2720</name>
    <name type="ordered locus">S2911</name>
</gene>
<name>SYA_SHIFL</name>
<keyword id="KW-0007">Acetylation</keyword>
<keyword id="KW-0030">Aminoacyl-tRNA synthetase</keyword>
<keyword id="KW-0067">ATP-binding</keyword>
<keyword id="KW-0963">Cytoplasm</keyword>
<keyword id="KW-0436">Ligase</keyword>
<keyword id="KW-0479">Metal-binding</keyword>
<keyword id="KW-0547">Nucleotide-binding</keyword>
<keyword id="KW-0648">Protein biosynthesis</keyword>
<keyword id="KW-1185">Reference proteome</keyword>
<keyword id="KW-0694">RNA-binding</keyword>
<keyword id="KW-0820">tRNA-binding</keyword>
<keyword id="KW-0862">Zinc</keyword>
<proteinExistence type="inferred from homology"/>
<accession>Q7UBU3</accession>
<accession>Q83JZ1</accession>
<comment type="function">
    <text evidence="1">Catalyzes the attachment of alanine to tRNA(Ala) in a two-step reaction: alanine is first activated by ATP to form Ala-AMP and then transferred to the acceptor end of tRNA(Ala). Also edits incorrectly charged Ser-tRNA(Ala) and Gly-tRNA(Ala) via its editing domain.</text>
</comment>
<comment type="catalytic activity">
    <reaction evidence="1">
        <text>tRNA(Ala) + L-alanine + ATP = L-alanyl-tRNA(Ala) + AMP + diphosphate</text>
        <dbReference type="Rhea" id="RHEA:12540"/>
        <dbReference type="Rhea" id="RHEA-COMP:9657"/>
        <dbReference type="Rhea" id="RHEA-COMP:9923"/>
        <dbReference type="ChEBI" id="CHEBI:30616"/>
        <dbReference type="ChEBI" id="CHEBI:33019"/>
        <dbReference type="ChEBI" id="CHEBI:57972"/>
        <dbReference type="ChEBI" id="CHEBI:78442"/>
        <dbReference type="ChEBI" id="CHEBI:78497"/>
        <dbReference type="ChEBI" id="CHEBI:456215"/>
        <dbReference type="EC" id="6.1.1.7"/>
    </reaction>
</comment>
<comment type="cofactor">
    <cofactor evidence="1">
        <name>Zn(2+)</name>
        <dbReference type="ChEBI" id="CHEBI:29105"/>
    </cofactor>
    <text evidence="1">Binds 1 zinc ion per subunit.</text>
</comment>
<comment type="subunit">
    <text evidence="1">Homotetramer.</text>
</comment>
<comment type="subcellular location">
    <subcellularLocation>
        <location evidence="1">Cytoplasm</location>
    </subcellularLocation>
</comment>
<comment type="domain">
    <text evidence="1">Consists of three domains; the N-terminal catalytic domain, the editing domain and the C-terminal C-Ala domain. The editing domain removes incorrectly charged amino acids, while the C-Ala domain, along with tRNA(Ala), serves as a bridge to cooperatively bring together the editing and aminoacylation centers thus stimulating deacylation of misacylated tRNAs.</text>
</comment>
<comment type="similarity">
    <text evidence="1">Belongs to the class-II aminoacyl-tRNA synthetase family.</text>
</comment>
<evidence type="ECO:0000255" key="1">
    <source>
        <dbReference type="HAMAP-Rule" id="MF_00036"/>
    </source>
</evidence>